<proteinExistence type="inferred from homology"/>
<evidence type="ECO:0000250" key="1"/>
<evidence type="ECO:0000255" key="2">
    <source>
        <dbReference type="PROSITE-ProRule" id="PRU00159"/>
    </source>
</evidence>
<evidence type="ECO:0000255" key="3">
    <source>
        <dbReference type="PROSITE-ProRule" id="PRU10027"/>
    </source>
</evidence>
<evidence type="ECO:0000269" key="4">
    <source>
    </source>
</evidence>
<evidence type="ECO:0000305" key="5"/>
<feature type="chain" id="PRO_0000232676" description="Casein kinase II subunit alpha">
    <location>
        <begin position="1"/>
        <end position="348"/>
    </location>
</feature>
<feature type="domain" description="Protein kinase" evidence="2">
    <location>
        <begin position="55"/>
        <end position="340"/>
    </location>
</feature>
<feature type="active site" description="Proton acceptor" evidence="2 3">
    <location>
        <position position="172"/>
    </location>
</feature>
<feature type="binding site" evidence="2">
    <location>
        <begin position="61"/>
        <end position="69"/>
    </location>
    <ligand>
        <name>ATP</name>
        <dbReference type="ChEBI" id="CHEBI:30616"/>
    </ligand>
</feature>
<feature type="binding site" evidence="2">
    <location>
        <position position="84"/>
    </location>
    <ligand>
        <name>ATP</name>
        <dbReference type="ChEBI" id="CHEBI:30616"/>
    </ligand>
</feature>
<feature type="sequence conflict" description="In Ref. 1; CAC86226." evidence="5" ref="1">
    <original>H</original>
    <variation>P</variation>
    <location>
        <position position="170"/>
    </location>
</feature>
<feature type="sequence conflict" description="In Ref. 1; CAC86226." evidence="5" ref="1">
    <original>R</original>
    <variation>G</variation>
    <location>
        <position position="328"/>
    </location>
</feature>
<organism>
    <name type="scientific">Theileria annulata</name>
    <dbReference type="NCBI Taxonomy" id="5874"/>
    <lineage>
        <taxon>Eukaryota</taxon>
        <taxon>Sar</taxon>
        <taxon>Alveolata</taxon>
        <taxon>Apicomplexa</taxon>
        <taxon>Aconoidasida</taxon>
        <taxon>Piroplasmida</taxon>
        <taxon>Theileriidae</taxon>
        <taxon>Theileria</taxon>
    </lineage>
</organism>
<accession>Q4U925</accession>
<accession>Q8WPV4</accession>
<keyword id="KW-0067">ATP-binding</keyword>
<keyword id="KW-0963">Cytoplasm</keyword>
<keyword id="KW-0418">Kinase</keyword>
<keyword id="KW-0547">Nucleotide-binding</keyword>
<keyword id="KW-1185">Reference proteome</keyword>
<keyword id="KW-0723">Serine/threonine-protein kinase</keyword>
<keyword id="KW-0808">Transferase</keyword>
<protein>
    <recommendedName>
        <fullName>Casein kinase II subunit alpha</fullName>
        <ecNumber>2.7.11.1</ecNumber>
    </recommendedName>
    <alternativeName>
        <fullName>TaCKIIalpha</fullName>
        <shortName>CK II</shortName>
    </alternativeName>
</protein>
<gene>
    <name type="ORF">TA10630</name>
</gene>
<sequence>MDQMEVPDNDKNRKYPTKDLKIILPKTYADVNSKKGPEYWDYENITLKWNVPDSYEIVRKIGRGKFSEVFEGLNTVTKDKCVIKILKPVKKKKIKREIKILQNLRGGPNIIKLLDIVKDPQSRTPSLIFEHVNNTDFKTLYPTLTIQDIKYYIYQLLKAMNYCHSQGIMHRDIKPHNVMIDHEKKILRLIDWGLAEFYHPEQEYSVRVATRYYKGPELLVDMRYYDYSLDIWSIGCMLAGIIFKKEPFFYGHDNYDQLVKIAKVLGTEDLHRYFEKYGLKFAPAYQEILGNHSKKPWTKFVHHENQHLVSPEVMDLLDRMLVYDHTKRITPLEAMEHPFFNEIKNNSV</sequence>
<reference key="1">
    <citation type="journal article" date="2003" name="J. Cell. Physiol.">
        <title>Initiation of translation and cellular localization of Theileria annulata casein kinase IIalpha: implication for its role in host cell transformation.</title>
        <authorList>
            <person name="Biermann R."/>
            <person name="Schnittger L."/>
            <person name="Beyer D."/>
            <person name="Ahmed J.S."/>
        </authorList>
    </citation>
    <scope>NUCLEOTIDE SEQUENCE [GENOMIC DNA]</scope>
    <scope>INITIATION SITE</scope>
    <scope>SUBCELLULAR LOCATION</scope>
</reference>
<reference key="2">
    <citation type="journal article" date="2005" name="Science">
        <title>Genome of the host-cell transforming parasite Theileria annulata compared with T. parva.</title>
        <authorList>
            <person name="Pain A."/>
            <person name="Renauld H."/>
            <person name="Berriman M."/>
            <person name="Murphy L."/>
            <person name="Yeats C.A."/>
            <person name="Weir W."/>
            <person name="Kerhornou A."/>
            <person name="Aslett M."/>
            <person name="Bishop R."/>
            <person name="Bouchier C."/>
            <person name="Cochet M."/>
            <person name="Coulson R.M.R."/>
            <person name="Cronin A."/>
            <person name="de Villiers E.P."/>
            <person name="Fraser A."/>
            <person name="Fosker N."/>
            <person name="Gardner M."/>
            <person name="Goble A."/>
            <person name="Griffiths-Jones S."/>
            <person name="Harris D.E."/>
            <person name="Katzer F."/>
            <person name="Larke N."/>
            <person name="Lord A."/>
            <person name="Maser P."/>
            <person name="McKellar S."/>
            <person name="Mooney P."/>
            <person name="Morton F."/>
            <person name="Nene V."/>
            <person name="O'Neil S."/>
            <person name="Price C."/>
            <person name="Quail M.A."/>
            <person name="Rabbinowitsch E."/>
            <person name="Rawlings N.D."/>
            <person name="Rutter S."/>
            <person name="Saunders D."/>
            <person name="Seeger K."/>
            <person name="Shah T."/>
            <person name="Squares R."/>
            <person name="Squares S."/>
            <person name="Tivey A."/>
            <person name="Walker A.R."/>
            <person name="Woodward J."/>
            <person name="Dobbelaere D.A.E."/>
            <person name="Langsley G."/>
            <person name="Rajandream M.A."/>
            <person name="McKeever D."/>
            <person name="Shiels B."/>
            <person name="Tait A."/>
            <person name="Barrell B.G."/>
            <person name="Hall N."/>
        </authorList>
    </citation>
    <scope>NUCLEOTIDE SEQUENCE [LARGE SCALE GENOMIC DNA]</scope>
    <source>
        <strain>Ankara</strain>
    </source>
</reference>
<dbReference type="EC" id="2.7.11.1"/>
<dbReference type="EMBL" id="AJ315847">
    <property type="protein sequence ID" value="CAC86226.1"/>
    <property type="molecule type" value="Genomic_DNA"/>
</dbReference>
<dbReference type="EMBL" id="CR940353">
    <property type="protein sequence ID" value="CAI76678.1"/>
    <property type="status" value="ALT_INIT"/>
    <property type="molecule type" value="Genomic_DNA"/>
</dbReference>
<dbReference type="SMR" id="Q4U925"/>
<dbReference type="FunCoup" id="Q4U925">
    <property type="interactions" value="278"/>
</dbReference>
<dbReference type="STRING" id="5874.Q4U925"/>
<dbReference type="KEGG" id="tan:TA10630"/>
<dbReference type="VEuPathDB" id="PiroplasmaDB:TA10630"/>
<dbReference type="eggNOG" id="KOG0668">
    <property type="taxonomic scope" value="Eukaryota"/>
</dbReference>
<dbReference type="InParanoid" id="Q4U925"/>
<dbReference type="OrthoDB" id="10254671at2759"/>
<dbReference type="Proteomes" id="UP000001950">
    <property type="component" value="Chromosome 4"/>
</dbReference>
<dbReference type="GO" id="GO:0005829">
    <property type="term" value="C:cytosol"/>
    <property type="evidence" value="ECO:0007669"/>
    <property type="project" value="TreeGrafter"/>
</dbReference>
<dbReference type="GO" id="GO:0005634">
    <property type="term" value="C:nucleus"/>
    <property type="evidence" value="ECO:0007669"/>
    <property type="project" value="TreeGrafter"/>
</dbReference>
<dbReference type="GO" id="GO:0005956">
    <property type="term" value="C:protein kinase CK2 complex"/>
    <property type="evidence" value="ECO:0007669"/>
    <property type="project" value="TreeGrafter"/>
</dbReference>
<dbReference type="GO" id="GO:0005524">
    <property type="term" value="F:ATP binding"/>
    <property type="evidence" value="ECO:0007669"/>
    <property type="project" value="UniProtKB-KW"/>
</dbReference>
<dbReference type="GO" id="GO:0106310">
    <property type="term" value="F:protein serine kinase activity"/>
    <property type="evidence" value="ECO:0007669"/>
    <property type="project" value="RHEA"/>
</dbReference>
<dbReference type="GO" id="GO:0004674">
    <property type="term" value="F:protein serine/threonine kinase activity"/>
    <property type="evidence" value="ECO:0007669"/>
    <property type="project" value="UniProtKB-KW"/>
</dbReference>
<dbReference type="GO" id="GO:0051726">
    <property type="term" value="P:regulation of cell cycle"/>
    <property type="evidence" value="ECO:0007669"/>
    <property type="project" value="TreeGrafter"/>
</dbReference>
<dbReference type="CDD" id="cd14132">
    <property type="entry name" value="STKc_CK2_alpha"/>
    <property type="match status" value="1"/>
</dbReference>
<dbReference type="FunFam" id="1.10.510.10:FF:000059">
    <property type="entry name" value="Casein kinase II subunit alpha"/>
    <property type="match status" value="1"/>
</dbReference>
<dbReference type="FunFam" id="3.30.200.20:FF:000088">
    <property type="entry name" value="Casein kinase II subunit alpha"/>
    <property type="match status" value="1"/>
</dbReference>
<dbReference type="Gene3D" id="3.30.200.20">
    <property type="entry name" value="Phosphorylase Kinase, domain 1"/>
    <property type="match status" value="1"/>
</dbReference>
<dbReference type="Gene3D" id="1.10.510.10">
    <property type="entry name" value="Transferase(Phosphotransferase) domain 1"/>
    <property type="match status" value="1"/>
</dbReference>
<dbReference type="InterPro" id="IPR045216">
    <property type="entry name" value="CK2_alpha"/>
</dbReference>
<dbReference type="InterPro" id="IPR011009">
    <property type="entry name" value="Kinase-like_dom_sf"/>
</dbReference>
<dbReference type="InterPro" id="IPR000719">
    <property type="entry name" value="Prot_kinase_dom"/>
</dbReference>
<dbReference type="InterPro" id="IPR017441">
    <property type="entry name" value="Protein_kinase_ATP_BS"/>
</dbReference>
<dbReference type="InterPro" id="IPR008271">
    <property type="entry name" value="Ser/Thr_kinase_AS"/>
</dbReference>
<dbReference type="PANTHER" id="PTHR24054">
    <property type="entry name" value="CASEIN KINASE II SUBUNIT ALPHA"/>
    <property type="match status" value="1"/>
</dbReference>
<dbReference type="PANTHER" id="PTHR24054:SF0">
    <property type="entry name" value="CASEIN KINASE II SUBUNIT ALPHA"/>
    <property type="match status" value="1"/>
</dbReference>
<dbReference type="Pfam" id="PF00069">
    <property type="entry name" value="Pkinase"/>
    <property type="match status" value="1"/>
</dbReference>
<dbReference type="SMART" id="SM00220">
    <property type="entry name" value="S_TKc"/>
    <property type="match status" value="1"/>
</dbReference>
<dbReference type="SUPFAM" id="SSF56112">
    <property type="entry name" value="Protein kinase-like (PK-like)"/>
    <property type="match status" value="1"/>
</dbReference>
<dbReference type="PROSITE" id="PS00107">
    <property type="entry name" value="PROTEIN_KINASE_ATP"/>
    <property type="match status" value="1"/>
</dbReference>
<dbReference type="PROSITE" id="PS50011">
    <property type="entry name" value="PROTEIN_KINASE_DOM"/>
    <property type="match status" value="1"/>
</dbReference>
<dbReference type="PROSITE" id="PS00108">
    <property type="entry name" value="PROTEIN_KINASE_ST"/>
    <property type="match status" value="1"/>
</dbReference>
<name>CSK2A_THEAN</name>
<comment type="function">
    <text evidence="1">Casein kinases are operationally defined by their preferential utilization of acidic proteins such as caseins as substrates. The alpha chain contains the catalytic site (By similarity).</text>
</comment>
<comment type="catalytic activity">
    <reaction>
        <text>L-seryl-[protein] + ATP = O-phospho-L-seryl-[protein] + ADP + H(+)</text>
        <dbReference type="Rhea" id="RHEA:17989"/>
        <dbReference type="Rhea" id="RHEA-COMP:9863"/>
        <dbReference type="Rhea" id="RHEA-COMP:11604"/>
        <dbReference type="ChEBI" id="CHEBI:15378"/>
        <dbReference type="ChEBI" id="CHEBI:29999"/>
        <dbReference type="ChEBI" id="CHEBI:30616"/>
        <dbReference type="ChEBI" id="CHEBI:83421"/>
        <dbReference type="ChEBI" id="CHEBI:456216"/>
        <dbReference type="EC" id="2.7.11.1"/>
    </reaction>
</comment>
<comment type="catalytic activity">
    <reaction>
        <text>L-threonyl-[protein] + ATP = O-phospho-L-threonyl-[protein] + ADP + H(+)</text>
        <dbReference type="Rhea" id="RHEA:46608"/>
        <dbReference type="Rhea" id="RHEA-COMP:11060"/>
        <dbReference type="Rhea" id="RHEA-COMP:11605"/>
        <dbReference type="ChEBI" id="CHEBI:15378"/>
        <dbReference type="ChEBI" id="CHEBI:30013"/>
        <dbReference type="ChEBI" id="CHEBI:30616"/>
        <dbReference type="ChEBI" id="CHEBI:61977"/>
        <dbReference type="ChEBI" id="CHEBI:456216"/>
        <dbReference type="EC" id="2.7.11.1"/>
    </reaction>
</comment>
<comment type="subunit">
    <text evidence="1">Tetramer of two alpha and two beta chains.</text>
</comment>
<comment type="subcellular location">
    <subcellularLocation>
        <location evidence="4">Cytoplasm</location>
    </subcellularLocation>
</comment>
<comment type="similarity">
    <text evidence="2">Belongs to the protein kinase superfamily. Ser/Thr protein kinase family. CK2 subfamily.</text>
</comment>
<comment type="sequence caution" evidence="5">
    <conflict type="erroneous initiation">
        <sequence resource="EMBL-CDS" id="CAI76678"/>
    </conflict>
</comment>